<comment type="function">
    <text evidence="3">Required for apical extracellular matrix organization and epithelial junction maintenance.</text>
</comment>
<comment type="subcellular location">
    <subcellularLocation>
        <location evidence="3">Apical cell membrane</location>
        <topology evidence="1 3">Single-pass type I membrane protein</topology>
    </subcellularLocation>
</comment>
<comment type="tissue specificity">
    <text evidence="3">In L1 larvae, expressed in a subset of epithelial cells including epidermal, vulval and rectal cells and the excretory duct and pore. Also detected in some neurons. Absent from internal epithelia such as the gut and pharyngeal tubes.</text>
</comment>
<comment type="developmental stage">
    <text evidence="3">Expression begins around the ventral closure stage of embryogenesis, continues throughout larval development and decreases in adulthood.</text>
</comment>
<comment type="disruption phenotype">
    <text evidence="3">Lethal at early L1 larval stage due to excretory defects. Maternal copy required for survival.</text>
</comment>
<feature type="signal peptide" evidence="1">
    <location>
        <begin position="1"/>
        <end position="18"/>
    </location>
</feature>
<feature type="chain" id="PRO_0000422394" description="Leucine-rich repeat-containing protein egg-6" evidence="1">
    <location>
        <begin position="19"/>
        <end position="961"/>
    </location>
</feature>
<feature type="topological domain" description="Extracellular" evidence="1">
    <location>
        <begin position="19"/>
        <end position="854"/>
    </location>
</feature>
<feature type="transmembrane region" description="Helical" evidence="1">
    <location>
        <begin position="855"/>
        <end position="875"/>
    </location>
</feature>
<feature type="topological domain" description="Cytoplasmic" evidence="1">
    <location>
        <begin position="876"/>
        <end position="961"/>
    </location>
</feature>
<feature type="repeat" description="LRR 1" evidence="1">
    <location>
        <begin position="60"/>
        <end position="78"/>
    </location>
</feature>
<feature type="repeat" description="LRR 2" evidence="1">
    <location>
        <begin position="79"/>
        <end position="101"/>
    </location>
</feature>
<feature type="repeat" description="LRR 3" evidence="1">
    <location>
        <begin position="103"/>
        <end position="124"/>
    </location>
</feature>
<feature type="repeat" description="LRR 4" evidence="1">
    <location>
        <begin position="125"/>
        <end position="148"/>
    </location>
</feature>
<feature type="repeat" description="LRR 5" evidence="1">
    <location>
        <begin position="150"/>
        <end position="172"/>
    </location>
</feature>
<feature type="repeat" description="LRR 6" evidence="1">
    <location>
        <begin position="174"/>
        <end position="197"/>
    </location>
</feature>
<feature type="repeat" description="LRR 7" evidence="1">
    <location>
        <begin position="199"/>
        <end position="222"/>
    </location>
</feature>
<feature type="repeat" description="LRR 8" evidence="1">
    <location>
        <begin position="223"/>
        <end position="245"/>
    </location>
</feature>
<feature type="repeat" description="LRR 9" evidence="1">
    <location>
        <begin position="247"/>
        <end position="269"/>
    </location>
</feature>
<feature type="repeat" description="LRR 10" evidence="1">
    <location>
        <begin position="270"/>
        <end position="294"/>
    </location>
</feature>
<feature type="repeat" description="LRR 11" evidence="1">
    <location>
        <begin position="305"/>
        <end position="316"/>
    </location>
</feature>
<feature type="repeat" description="LRR 12" evidence="1">
    <location>
        <begin position="317"/>
        <end position="339"/>
    </location>
</feature>
<feature type="repeat" description="LRR 13" evidence="1">
    <location>
        <begin position="340"/>
        <end position="363"/>
    </location>
</feature>
<feature type="repeat" description="LRR 14" evidence="1">
    <location>
        <begin position="364"/>
        <end position="387"/>
    </location>
</feature>
<feature type="repeat" description="LRR 15" evidence="1">
    <location>
        <begin position="388"/>
        <end position="411"/>
    </location>
</feature>
<feature type="repeat" description="LRR 16" evidence="1">
    <location>
        <begin position="413"/>
        <end position="435"/>
    </location>
</feature>
<feature type="repeat" description="LRR 17" evidence="1">
    <location>
        <begin position="437"/>
        <end position="455"/>
    </location>
</feature>
<feature type="region of interest" description="Disordered" evidence="2">
    <location>
        <begin position="890"/>
        <end position="943"/>
    </location>
</feature>
<feature type="compositionally biased region" description="Low complexity" evidence="2">
    <location>
        <begin position="893"/>
        <end position="902"/>
    </location>
</feature>
<feature type="compositionally biased region" description="Polar residues" evidence="2">
    <location>
        <begin position="928"/>
        <end position="943"/>
    </location>
</feature>
<reference evidence="4 5" key="1">
    <citation type="journal article" date="2012" name="Development">
        <title>Extracellular leucine-rich repeat proteins are required to organize the apical extracellular matrix and maintain epithelial junction integrity in C. elegans.</title>
        <authorList>
            <person name="Mancuso V.P."/>
            <person name="Parry J.M."/>
            <person name="Storer L."/>
            <person name="Poggioli C."/>
            <person name="Nguyen K.C."/>
            <person name="Hall D.H."/>
            <person name="Sundaram M.V."/>
        </authorList>
    </citation>
    <scope>NUCLEOTIDE SEQUENCE [MRNA]</scope>
    <scope>FUNCTION</scope>
    <scope>SUBCELLULAR LOCATION</scope>
    <scope>TISSUE SPECIFICITY</scope>
    <scope>DEVELOPMENTAL STAGE</scope>
    <scope>DISRUPTION PHENOTYPE</scope>
    <source>
        <strain evidence="3">Bristol N2</strain>
    </source>
</reference>
<reference evidence="6" key="2">
    <citation type="journal article" date="1998" name="Science">
        <title>Genome sequence of the nematode C. elegans: a platform for investigating biology.</title>
        <authorList>
            <consortium name="The C. elegans sequencing consortium"/>
        </authorList>
    </citation>
    <scope>NUCLEOTIDE SEQUENCE [LARGE SCALE GENOMIC DNA]</scope>
    <source>
        <strain evidence="6">Bristol N2</strain>
    </source>
</reference>
<evidence type="ECO:0000255" key="1"/>
<evidence type="ECO:0000256" key="2">
    <source>
        <dbReference type="SAM" id="MobiDB-lite"/>
    </source>
</evidence>
<evidence type="ECO:0000269" key="3">
    <source>
    </source>
</evidence>
<evidence type="ECO:0000305" key="4"/>
<evidence type="ECO:0000312" key="5">
    <source>
        <dbReference type="EMBL" id="AEZ55700.1"/>
    </source>
</evidence>
<evidence type="ECO:0000312" key="6">
    <source>
        <dbReference type="EMBL" id="CAB03182.1"/>
    </source>
</evidence>
<evidence type="ECO:0000312" key="7">
    <source>
        <dbReference type="WormBase" id="K07A12.2"/>
    </source>
</evidence>
<name>EGG6_CAEEL</name>
<gene>
    <name evidence="6 7" type="primary">egg-6</name>
    <name type="ORF">K07A12.2</name>
</gene>
<accession>P90920</accession>
<proteinExistence type="evidence at transcript level"/>
<organism>
    <name type="scientific">Caenorhabditis elegans</name>
    <dbReference type="NCBI Taxonomy" id="6239"/>
    <lineage>
        <taxon>Eukaryota</taxon>
        <taxon>Metazoa</taxon>
        <taxon>Ecdysozoa</taxon>
        <taxon>Nematoda</taxon>
        <taxon>Chromadorea</taxon>
        <taxon>Rhabditida</taxon>
        <taxon>Rhabditina</taxon>
        <taxon>Rhabditomorpha</taxon>
        <taxon>Rhabditoidea</taxon>
        <taxon>Rhabditidae</taxon>
        <taxon>Peloderinae</taxon>
        <taxon>Caenorhabditis</taxon>
    </lineage>
</organism>
<protein>
    <recommendedName>
        <fullName>Leucine-rich repeat-containing protein egg-6</fullName>
    </recommendedName>
</protein>
<sequence>MRWLTLIAVAHLIAFLSSAEITCPRIPEKCDCKISKSMIILSCNGEDVKTIAQTVGTSQIDELHILNGTDVKIESLPFNGLRTIAILNSTLQSFSPTAWRHVEATIEHITINGNELKTVPVFGNLSTLMSMNLNSNQISSIPDKAFNGLSALTQLRLENNAICDFPPKSLDAVKASLVLLDVSGNCLDAIPAQILRNAANLMYLDLGSNNISEINNFELMNLPFLRELRVQNNTLRRIHPMAFMNVPQLQYLYLQDNIISTLDGNRLQGFKNLEVLDVSNNALYALPSLKDLPNLKQVRVDGNLITKIETLAFSNNPNLQLISVQNNNIVQISRNSFESLDKLVVLLVGNNSLAKIERGMFDGMKNLQQLSIRNNTLTALDASSFAQLAHLTTLDLGHNKIHDIEEGTFDKLSKLFWLDLSNNKISGFKTSVFKKKISNILLDGNQLICDESFNEFLTYLIANKVRTFLPFQQEIMCHGPEKYAGVRLKDLMMKKANETLSEGSRLLGVPQGSNQHSLLSSFLPSLGPLGTLNGAGGAAIPLVNTLTNTIPALRSIPGFGGNIPVGTGASSVPNKNLNDAIEGFTGPLVRFATGGQPVASDIEQLIRSIPNMVVNVPGFGDIDLSKMDPTMIQYVLNGGQIPGIDKATLDKIVKQTMNKMHTAAAANLAGNPVEGQEKVLPPLDKLPSGLVTQVMSGEPLPGLNENQTKIIMEYYTHQMPGMDGIPARPVESQGNTTANNMFNPAMFDLLKMLPPGYNLSKIPMEVIAAVTRGEVPDMRLLPEDLLEHFKQHTTSLTSMFAGATAKNISIEEILEKLPVFVRPELSTFVPYDINELTSEMVLEQEQNERHRNIRIITAIALAFVGAVTVVVIIFFVNYTKKQRRLRKSLVYRSSPSSSGSSGQNAANESGRSSAAPSPIRPPLMNIPKTPNNRTMESTFGQPQLCSTLLENPQAVSHRSRH</sequence>
<keyword id="KW-1003">Cell membrane</keyword>
<keyword id="KW-0433">Leucine-rich repeat</keyword>
<keyword id="KW-0472">Membrane</keyword>
<keyword id="KW-1185">Reference proteome</keyword>
<keyword id="KW-0677">Repeat</keyword>
<keyword id="KW-0732">Signal</keyword>
<keyword id="KW-0812">Transmembrane</keyword>
<keyword id="KW-1133">Transmembrane helix</keyword>
<dbReference type="EMBL" id="JQ292908">
    <property type="protein sequence ID" value="AEZ55700.1"/>
    <property type="molecule type" value="mRNA"/>
</dbReference>
<dbReference type="EMBL" id="Z81098">
    <property type="protein sequence ID" value="CAB03182.1"/>
    <property type="molecule type" value="Genomic_DNA"/>
</dbReference>
<dbReference type="PIR" id="T23395">
    <property type="entry name" value="T23395"/>
</dbReference>
<dbReference type="RefSeq" id="NP_492348.1">
    <property type="nucleotide sequence ID" value="NM_059947.6"/>
</dbReference>
<dbReference type="SMR" id="P90920"/>
<dbReference type="BioGRID" id="38103">
    <property type="interactions" value="1"/>
</dbReference>
<dbReference type="DIP" id="DIP-24762N"/>
<dbReference type="FunCoup" id="P90920">
    <property type="interactions" value="165"/>
</dbReference>
<dbReference type="STRING" id="6239.K07A12.2.1"/>
<dbReference type="PaxDb" id="6239-K07A12.2"/>
<dbReference type="PeptideAtlas" id="P90920"/>
<dbReference type="EnsemblMetazoa" id="K07A12.2.1">
    <property type="protein sequence ID" value="K07A12.2.1"/>
    <property type="gene ID" value="WBGene00010621"/>
</dbReference>
<dbReference type="GeneID" id="172670"/>
<dbReference type="KEGG" id="cel:CELE_K07A12.2"/>
<dbReference type="UCSC" id="K07A12.2">
    <property type="organism name" value="c. elegans"/>
</dbReference>
<dbReference type="AGR" id="WB:WBGene00010621"/>
<dbReference type="CTD" id="172670"/>
<dbReference type="WormBase" id="K07A12.2">
    <property type="protein sequence ID" value="CE11866"/>
    <property type="gene ID" value="WBGene00010621"/>
    <property type="gene designation" value="egg-6"/>
</dbReference>
<dbReference type="eggNOG" id="KOG0619">
    <property type="taxonomic scope" value="Eukaryota"/>
</dbReference>
<dbReference type="GeneTree" id="ENSGT00940000159318"/>
<dbReference type="HOGENOM" id="CLU_308015_0_0_1"/>
<dbReference type="InParanoid" id="P90920"/>
<dbReference type="OMA" id="MAFMNVP"/>
<dbReference type="OrthoDB" id="1055097at2759"/>
<dbReference type="PhylomeDB" id="P90920"/>
<dbReference type="SignaLink" id="P90920"/>
<dbReference type="PRO" id="PR:P90920"/>
<dbReference type="Proteomes" id="UP000001940">
    <property type="component" value="Chromosome I"/>
</dbReference>
<dbReference type="Bgee" id="WBGene00010621">
    <property type="expression patterns" value="Expressed in germ line (C elegans) and 4 other cell types or tissues"/>
</dbReference>
<dbReference type="GO" id="GO:0016324">
    <property type="term" value="C:apical plasma membrane"/>
    <property type="evidence" value="ECO:0007669"/>
    <property type="project" value="UniProtKB-SubCell"/>
</dbReference>
<dbReference type="FunFam" id="3.80.10.10:FF:001164">
    <property type="entry name" value="GH01279p"/>
    <property type="match status" value="1"/>
</dbReference>
<dbReference type="Gene3D" id="3.80.10.10">
    <property type="entry name" value="Ribonuclease Inhibitor"/>
    <property type="match status" value="2"/>
</dbReference>
<dbReference type="InterPro" id="IPR001611">
    <property type="entry name" value="Leu-rich_rpt"/>
</dbReference>
<dbReference type="InterPro" id="IPR003591">
    <property type="entry name" value="Leu-rich_rpt_typical-subtyp"/>
</dbReference>
<dbReference type="InterPro" id="IPR032675">
    <property type="entry name" value="LRR_dom_sf"/>
</dbReference>
<dbReference type="PANTHER" id="PTHR24366">
    <property type="entry name" value="IG(IMMUNOGLOBULIN) AND LRR(LEUCINE RICH REPEAT) DOMAINS"/>
    <property type="match status" value="1"/>
</dbReference>
<dbReference type="PANTHER" id="PTHR24366:SF96">
    <property type="entry name" value="LEUCINE RICH REPEAT CONTAINING 53"/>
    <property type="match status" value="1"/>
</dbReference>
<dbReference type="Pfam" id="PF13855">
    <property type="entry name" value="LRR_8"/>
    <property type="match status" value="3"/>
</dbReference>
<dbReference type="SMART" id="SM00365">
    <property type="entry name" value="LRR_SD22"/>
    <property type="match status" value="5"/>
</dbReference>
<dbReference type="SMART" id="SM00369">
    <property type="entry name" value="LRR_TYP"/>
    <property type="match status" value="12"/>
</dbReference>
<dbReference type="SUPFAM" id="SSF52058">
    <property type="entry name" value="L domain-like"/>
    <property type="match status" value="2"/>
</dbReference>
<dbReference type="PROSITE" id="PS51450">
    <property type="entry name" value="LRR"/>
    <property type="match status" value="14"/>
</dbReference>